<dbReference type="EC" id="3.6.4.-" evidence="1"/>
<dbReference type="EMBL" id="CP000487">
    <property type="protein sequence ID" value="ABK82226.1"/>
    <property type="molecule type" value="Genomic_DNA"/>
</dbReference>
<dbReference type="RefSeq" id="WP_011731833.1">
    <property type="nucleotide sequence ID" value="NC_008599.1"/>
</dbReference>
<dbReference type="SMR" id="A0RN84"/>
<dbReference type="GeneID" id="61064327"/>
<dbReference type="KEGG" id="cff:CFF8240_0471"/>
<dbReference type="eggNOG" id="COG2255">
    <property type="taxonomic scope" value="Bacteria"/>
</dbReference>
<dbReference type="HOGENOM" id="CLU_055599_1_0_7"/>
<dbReference type="Proteomes" id="UP000000760">
    <property type="component" value="Chromosome"/>
</dbReference>
<dbReference type="GO" id="GO:0005737">
    <property type="term" value="C:cytoplasm"/>
    <property type="evidence" value="ECO:0007669"/>
    <property type="project" value="UniProtKB-SubCell"/>
</dbReference>
<dbReference type="GO" id="GO:0048476">
    <property type="term" value="C:Holliday junction resolvase complex"/>
    <property type="evidence" value="ECO:0007669"/>
    <property type="project" value="UniProtKB-UniRule"/>
</dbReference>
<dbReference type="GO" id="GO:0005524">
    <property type="term" value="F:ATP binding"/>
    <property type="evidence" value="ECO:0007669"/>
    <property type="project" value="UniProtKB-UniRule"/>
</dbReference>
<dbReference type="GO" id="GO:0016887">
    <property type="term" value="F:ATP hydrolysis activity"/>
    <property type="evidence" value="ECO:0007669"/>
    <property type="project" value="InterPro"/>
</dbReference>
<dbReference type="GO" id="GO:0000400">
    <property type="term" value="F:four-way junction DNA binding"/>
    <property type="evidence" value="ECO:0007669"/>
    <property type="project" value="UniProtKB-UniRule"/>
</dbReference>
<dbReference type="GO" id="GO:0009378">
    <property type="term" value="F:four-way junction helicase activity"/>
    <property type="evidence" value="ECO:0007669"/>
    <property type="project" value="InterPro"/>
</dbReference>
<dbReference type="GO" id="GO:0006310">
    <property type="term" value="P:DNA recombination"/>
    <property type="evidence" value="ECO:0007669"/>
    <property type="project" value="UniProtKB-UniRule"/>
</dbReference>
<dbReference type="GO" id="GO:0006281">
    <property type="term" value="P:DNA repair"/>
    <property type="evidence" value="ECO:0007669"/>
    <property type="project" value="UniProtKB-UniRule"/>
</dbReference>
<dbReference type="CDD" id="cd00009">
    <property type="entry name" value="AAA"/>
    <property type="match status" value="1"/>
</dbReference>
<dbReference type="Gene3D" id="1.10.8.60">
    <property type="match status" value="1"/>
</dbReference>
<dbReference type="Gene3D" id="3.40.50.300">
    <property type="entry name" value="P-loop containing nucleotide triphosphate hydrolases"/>
    <property type="match status" value="1"/>
</dbReference>
<dbReference type="Gene3D" id="1.10.10.10">
    <property type="entry name" value="Winged helix-like DNA-binding domain superfamily/Winged helix DNA-binding domain"/>
    <property type="match status" value="1"/>
</dbReference>
<dbReference type="HAMAP" id="MF_00016">
    <property type="entry name" value="DNA_HJ_migration_RuvB"/>
    <property type="match status" value="1"/>
</dbReference>
<dbReference type="InterPro" id="IPR003593">
    <property type="entry name" value="AAA+_ATPase"/>
</dbReference>
<dbReference type="InterPro" id="IPR041445">
    <property type="entry name" value="AAA_lid_4"/>
</dbReference>
<dbReference type="InterPro" id="IPR004605">
    <property type="entry name" value="DNA_helicase_Holl-junc_RuvB"/>
</dbReference>
<dbReference type="InterPro" id="IPR027417">
    <property type="entry name" value="P-loop_NTPase"/>
</dbReference>
<dbReference type="InterPro" id="IPR008824">
    <property type="entry name" value="RuvB-like_N"/>
</dbReference>
<dbReference type="InterPro" id="IPR008823">
    <property type="entry name" value="RuvB_C"/>
</dbReference>
<dbReference type="InterPro" id="IPR036388">
    <property type="entry name" value="WH-like_DNA-bd_sf"/>
</dbReference>
<dbReference type="InterPro" id="IPR036390">
    <property type="entry name" value="WH_DNA-bd_sf"/>
</dbReference>
<dbReference type="NCBIfam" id="NF000868">
    <property type="entry name" value="PRK00080.1"/>
    <property type="match status" value="1"/>
</dbReference>
<dbReference type="NCBIfam" id="TIGR00635">
    <property type="entry name" value="ruvB"/>
    <property type="match status" value="1"/>
</dbReference>
<dbReference type="PANTHER" id="PTHR42848">
    <property type="match status" value="1"/>
</dbReference>
<dbReference type="PANTHER" id="PTHR42848:SF1">
    <property type="entry name" value="HOLLIDAY JUNCTION BRANCH MIGRATION COMPLEX SUBUNIT RUVB"/>
    <property type="match status" value="1"/>
</dbReference>
<dbReference type="Pfam" id="PF17864">
    <property type="entry name" value="AAA_lid_4"/>
    <property type="match status" value="1"/>
</dbReference>
<dbReference type="Pfam" id="PF05491">
    <property type="entry name" value="RuvB_C"/>
    <property type="match status" value="1"/>
</dbReference>
<dbReference type="Pfam" id="PF05496">
    <property type="entry name" value="RuvB_N"/>
    <property type="match status" value="1"/>
</dbReference>
<dbReference type="SMART" id="SM00382">
    <property type="entry name" value="AAA"/>
    <property type="match status" value="1"/>
</dbReference>
<dbReference type="SUPFAM" id="SSF52540">
    <property type="entry name" value="P-loop containing nucleoside triphosphate hydrolases"/>
    <property type="match status" value="1"/>
</dbReference>
<dbReference type="SUPFAM" id="SSF46785">
    <property type="entry name" value="Winged helix' DNA-binding domain"/>
    <property type="match status" value="1"/>
</dbReference>
<feature type="chain" id="PRO_1000001381" description="Holliday junction branch migration complex subunit RuvB">
    <location>
        <begin position="1"/>
        <end position="343"/>
    </location>
</feature>
<feature type="region of interest" description="Large ATPase domain (RuvB-L)" evidence="1">
    <location>
        <begin position="1"/>
        <end position="181"/>
    </location>
</feature>
<feature type="region of interest" description="Small ATPAse domain (RuvB-S)" evidence="1">
    <location>
        <begin position="182"/>
        <end position="252"/>
    </location>
</feature>
<feature type="region of interest" description="Head domain (RuvB-H)" evidence="1">
    <location>
        <begin position="255"/>
        <end position="343"/>
    </location>
</feature>
<feature type="binding site" evidence="1">
    <location>
        <position position="20"/>
    </location>
    <ligand>
        <name>ATP</name>
        <dbReference type="ChEBI" id="CHEBI:30616"/>
    </ligand>
</feature>
<feature type="binding site" evidence="1">
    <location>
        <position position="21"/>
    </location>
    <ligand>
        <name>ATP</name>
        <dbReference type="ChEBI" id="CHEBI:30616"/>
    </ligand>
</feature>
<feature type="binding site" evidence="1">
    <location>
        <position position="62"/>
    </location>
    <ligand>
        <name>ATP</name>
        <dbReference type="ChEBI" id="CHEBI:30616"/>
    </ligand>
</feature>
<feature type="binding site" evidence="1">
    <location>
        <position position="65"/>
    </location>
    <ligand>
        <name>ATP</name>
        <dbReference type="ChEBI" id="CHEBI:30616"/>
    </ligand>
</feature>
<feature type="binding site" evidence="1">
    <location>
        <position position="66"/>
    </location>
    <ligand>
        <name>ATP</name>
        <dbReference type="ChEBI" id="CHEBI:30616"/>
    </ligand>
</feature>
<feature type="binding site" evidence="1">
    <location>
        <position position="66"/>
    </location>
    <ligand>
        <name>Mg(2+)</name>
        <dbReference type="ChEBI" id="CHEBI:18420"/>
    </ligand>
</feature>
<feature type="binding site" evidence="1">
    <location>
        <position position="67"/>
    </location>
    <ligand>
        <name>ATP</name>
        <dbReference type="ChEBI" id="CHEBI:30616"/>
    </ligand>
</feature>
<feature type="binding site" evidence="1">
    <location>
        <begin position="128"/>
        <end position="130"/>
    </location>
    <ligand>
        <name>ATP</name>
        <dbReference type="ChEBI" id="CHEBI:30616"/>
    </ligand>
</feature>
<feature type="binding site" evidence="1">
    <location>
        <position position="171"/>
    </location>
    <ligand>
        <name>ATP</name>
        <dbReference type="ChEBI" id="CHEBI:30616"/>
    </ligand>
</feature>
<feature type="binding site" evidence="1">
    <location>
        <position position="181"/>
    </location>
    <ligand>
        <name>ATP</name>
        <dbReference type="ChEBI" id="CHEBI:30616"/>
    </ligand>
</feature>
<feature type="binding site" evidence="1">
    <location>
        <position position="218"/>
    </location>
    <ligand>
        <name>ATP</name>
        <dbReference type="ChEBI" id="CHEBI:30616"/>
    </ligand>
</feature>
<feature type="binding site" evidence="1">
    <location>
        <position position="308"/>
    </location>
    <ligand>
        <name>DNA</name>
        <dbReference type="ChEBI" id="CHEBI:16991"/>
    </ligand>
</feature>
<feature type="binding site" evidence="1">
    <location>
        <position position="313"/>
    </location>
    <ligand>
        <name>DNA</name>
        <dbReference type="ChEBI" id="CHEBI:16991"/>
    </ligand>
</feature>
<reference key="1">
    <citation type="submission" date="2006-11" db="EMBL/GenBank/DDBJ databases">
        <title>Sequence of Campylobacter fetus subsp. fetus 82-40.</title>
        <authorList>
            <person name="Fouts D.E."/>
            <person name="Nelson K.E."/>
        </authorList>
    </citation>
    <scope>NUCLEOTIDE SEQUENCE [LARGE SCALE GENOMIC DNA]</scope>
    <source>
        <strain>82-40</strain>
    </source>
</reference>
<organism>
    <name type="scientific">Campylobacter fetus subsp. fetus (strain 82-40)</name>
    <dbReference type="NCBI Taxonomy" id="360106"/>
    <lineage>
        <taxon>Bacteria</taxon>
        <taxon>Pseudomonadati</taxon>
        <taxon>Campylobacterota</taxon>
        <taxon>Epsilonproteobacteria</taxon>
        <taxon>Campylobacterales</taxon>
        <taxon>Campylobacteraceae</taxon>
        <taxon>Campylobacter</taxon>
    </lineage>
</organism>
<proteinExistence type="inferred from homology"/>
<protein>
    <recommendedName>
        <fullName evidence="1">Holliday junction branch migration complex subunit RuvB</fullName>
        <ecNumber evidence="1">3.6.4.-</ecNumber>
    </recommendedName>
</protein>
<sequence>MDRIVEIEKVSFESEYEVTLRPLTFEEYIGQEKIKSNLKVFIKAAKKRLESLDHVLFYGPPGLGKTTLAHIIANEMGANIKISSAPMIEKSGDLAAILTNLEEGDVLFIDEIHRLSPAIEEVLYSAMEDFRLDIIIGSGPAAQTIKIDIPKFTLIGATTRAGMISAPLRDRFGMQFRLQFYTDNELARIISIAASKLGKNSTKEASLEIAKRSRGTPRIALRLLKRIRDFAEVSDENSISKDRAKSSLDSLGVNDLGFDEMDLKYLDILVGSKRALGLSTIAAALSEDEGTVEDVIEPYLLSNGYIERTAKGRILSFKSYSVFGITPPMHITEEKQNKGLFNE</sequence>
<name>RUVB_CAMFF</name>
<gene>
    <name evidence="1" type="primary">ruvB</name>
    <name type="ordered locus">CFF8240_0471</name>
</gene>
<keyword id="KW-0067">ATP-binding</keyword>
<keyword id="KW-0963">Cytoplasm</keyword>
<keyword id="KW-0227">DNA damage</keyword>
<keyword id="KW-0233">DNA recombination</keyword>
<keyword id="KW-0234">DNA repair</keyword>
<keyword id="KW-0238">DNA-binding</keyword>
<keyword id="KW-0378">Hydrolase</keyword>
<keyword id="KW-0547">Nucleotide-binding</keyword>
<accession>A0RN84</accession>
<comment type="function">
    <text evidence="1">The RuvA-RuvB-RuvC complex processes Holliday junction (HJ) DNA during genetic recombination and DNA repair, while the RuvA-RuvB complex plays an important role in the rescue of blocked DNA replication forks via replication fork reversal (RFR). RuvA specifically binds to HJ cruciform DNA, conferring on it an open structure. The RuvB hexamer acts as an ATP-dependent pump, pulling dsDNA into and through the RuvAB complex. RuvB forms 2 homohexamers on either side of HJ DNA bound by 1 or 2 RuvA tetramers; 4 subunits per hexamer contact DNA at a time. Coordinated motions by a converter formed by DNA-disengaged RuvB subunits stimulates ATP hydrolysis and nucleotide exchange. Immobilization of the converter enables RuvB to convert the ATP-contained energy into a lever motion, pulling 2 nucleotides of DNA out of the RuvA tetramer per ATP hydrolyzed, thus driving DNA branch migration. The RuvB motors rotate together with the DNA substrate, which together with the progressing nucleotide cycle form the mechanistic basis for DNA recombination by continuous HJ branch migration. Branch migration allows RuvC to scan DNA until it finds its consensus sequence, where it cleaves and resolves cruciform DNA.</text>
</comment>
<comment type="catalytic activity">
    <reaction evidence="1">
        <text>ATP + H2O = ADP + phosphate + H(+)</text>
        <dbReference type="Rhea" id="RHEA:13065"/>
        <dbReference type="ChEBI" id="CHEBI:15377"/>
        <dbReference type="ChEBI" id="CHEBI:15378"/>
        <dbReference type="ChEBI" id="CHEBI:30616"/>
        <dbReference type="ChEBI" id="CHEBI:43474"/>
        <dbReference type="ChEBI" id="CHEBI:456216"/>
    </reaction>
</comment>
<comment type="subunit">
    <text evidence="1">Homohexamer. Forms an RuvA(8)-RuvB(12)-Holliday junction (HJ) complex. HJ DNA is sandwiched between 2 RuvA tetramers; dsDNA enters through RuvA and exits via RuvB. An RuvB hexamer assembles on each DNA strand where it exits the tetramer. Each RuvB hexamer is contacted by two RuvA subunits (via domain III) on 2 adjacent RuvB subunits; this complex drives branch migration. In the full resolvosome a probable DNA-RuvA(4)-RuvB(12)-RuvC(2) complex forms which resolves the HJ.</text>
</comment>
<comment type="subcellular location">
    <subcellularLocation>
        <location evidence="1">Cytoplasm</location>
    </subcellularLocation>
</comment>
<comment type="domain">
    <text evidence="1">Has 3 domains, the large (RuvB-L) and small ATPase (RuvB-S) domains and the C-terminal head (RuvB-H) domain. The head domain binds DNA, while the ATPase domains jointly bind ATP, ADP or are empty depending on the state of the subunit in the translocation cycle. During a single DNA translocation step the structure of each domain remains the same, but their relative positions change.</text>
</comment>
<comment type="similarity">
    <text evidence="1">Belongs to the RuvB family.</text>
</comment>
<evidence type="ECO:0000255" key="1">
    <source>
        <dbReference type="HAMAP-Rule" id="MF_00016"/>
    </source>
</evidence>